<gene>
    <name evidence="1" type="primary">nhaA</name>
    <name type="ordered locus">Sfri_2941</name>
</gene>
<accession>Q07YY4</accession>
<proteinExistence type="inferred from homology"/>
<dbReference type="EMBL" id="CP000447">
    <property type="protein sequence ID" value="ABI72780.1"/>
    <property type="molecule type" value="Genomic_DNA"/>
</dbReference>
<dbReference type="RefSeq" id="WP_011638389.1">
    <property type="nucleotide sequence ID" value="NC_008345.1"/>
</dbReference>
<dbReference type="SMR" id="Q07YY4"/>
<dbReference type="STRING" id="318167.Sfri_2941"/>
<dbReference type="KEGG" id="sfr:Sfri_2941"/>
<dbReference type="eggNOG" id="COG3004">
    <property type="taxonomic scope" value="Bacteria"/>
</dbReference>
<dbReference type="HOGENOM" id="CLU_015803_1_0_6"/>
<dbReference type="OrthoDB" id="9808135at2"/>
<dbReference type="Proteomes" id="UP000000684">
    <property type="component" value="Chromosome"/>
</dbReference>
<dbReference type="GO" id="GO:0005886">
    <property type="term" value="C:plasma membrane"/>
    <property type="evidence" value="ECO:0007669"/>
    <property type="project" value="UniProtKB-SubCell"/>
</dbReference>
<dbReference type="GO" id="GO:0015385">
    <property type="term" value="F:sodium:proton antiporter activity"/>
    <property type="evidence" value="ECO:0007669"/>
    <property type="project" value="TreeGrafter"/>
</dbReference>
<dbReference type="GO" id="GO:0006885">
    <property type="term" value="P:regulation of pH"/>
    <property type="evidence" value="ECO:0007669"/>
    <property type="project" value="InterPro"/>
</dbReference>
<dbReference type="Gene3D" id="1.20.1530.10">
    <property type="entry name" value="Na+/H+ antiporter like domain"/>
    <property type="match status" value="1"/>
</dbReference>
<dbReference type="HAMAP" id="MF_01844">
    <property type="entry name" value="NhaA"/>
    <property type="match status" value="1"/>
</dbReference>
<dbReference type="InterPro" id="IPR023171">
    <property type="entry name" value="Na/H_antiporter_dom_sf"/>
</dbReference>
<dbReference type="InterPro" id="IPR004670">
    <property type="entry name" value="NhaA"/>
</dbReference>
<dbReference type="NCBIfam" id="TIGR00773">
    <property type="entry name" value="NhaA"/>
    <property type="match status" value="1"/>
</dbReference>
<dbReference type="NCBIfam" id="NF007111">
    <property type="entry name" value="PRK09560.1"/>
    <property type="match status" value="1"/>
</dbReference>
<dbReference type="NCBIfam" id="NF007112">
    <property type="entry name" value="PRK09561.1"/>
    <property type="match status" value="1"/>
</dbReference>
<dbReference type="PANTHER" id="PTHR30341:SF0">
    <property type="entry name" value="NA(+)_H(+) ANTIPORTER NHAA"/>
    <property type="match status" value="1"/>
</dbReference>
<dbReference type="PANTHER" id="PTHR30341">
    <property type="entry name" value="SODIUM ION/PROTON ANTIPORTER NHAA-RELATED"/>
    <property type="match status" value="1"/>
</dbReference>
<dbReference type="Pfam" id="PF06965">
    <property type="entry name" value="Na_H_antiport_1"/>
    <property type="match status" value="1"/>
</dbReference>
<protein>
    <recommendedName>
        <fullName evidence="1">Na(+)/H(+) antiporter NhaA</fullName>
    </recommendedName>
    <alternativeName>
        <fullName evidence="1">Sodium/proton antiporter NhaA</fullName>
    </alternativeName>
</protein>
<evidence type="ECO:0000255" key="1">
    <source>
        <dbReference type="HAMAP-Rule" id="MF_01844"/>
    </source>
</evidence>
<name>NHAA_SHEFN</name>
<comment type="function">
    <text evidence="1">Na(+)/H(+) antiporter that extrudes sodium in exchange for external protons.</text>
</comment>
<comment type="catalytic activity">
    <reaction evidence="1">
        <text>Na(+)(in) + 2 H(+)(out) = Na(+)(out) + 2 H(+)(in)</text>
        <dbReference type="Rhea" id="RHEA:29251"/>
        <dbReference type="ChEBI" id="CHEBI:15378"/>
        <dbReference type="ChEBI" id="CHEBI:29101"/>
    </reaction>
    <physiologicalReaction direction="left-to-right" evidence="1">
        <dbReference type="Rhea" id="RHEA:29252"/>
    </physiologicalReaction>
</comment>
<comment type="subcellular location">
    <subcellularLocation>
        <location evidence="1">Cell inner membrane</location>
        <topology evidence="1">Multi-pass membrane protein</topology>
    </subcellularLocation>
</comment>
<comment type="similarity">
    <text evidence="1">Belongs to the NhaA Na(+)/H(+) (TC 2.A.33) antiporter family.</text>
</comment>
<sequence>MERAIKNFLSQESAGGILLMVAVALAMILANSPLAGVYQGFLATEVQLRVGDLDIDKPLLLWINDGLMALFFLLIGLEVKRELLEGALSSVAKASLPSIAAIGGMVFPALFYLAFNYATPETQVGWAIPAATDIAFALGIMALLGNRVPVALKVFLLALAIIDDLGVIVIIALFYSTDLSMTSLVIAAVSIVLMVALNKKGVSSILPYGLLGFILWVAVLKSGVHATLAGVIIAFCIPLRAKDGTSPSEHLEHKLHPWSTFMILPVFAFANAGLSLTNMTLDSFAEPITLGIIMGLLLGKPIGVLLFSYLAVKLKLAELPPGIGWRHIIPVAVMCGIGFTMSVFIASLAFEHSPAAYGDYARLGILTGSLLAALIGYFWLAKVLPETGEKHETH</sequence>
<feature type="chain" id="PRO_0000334425" description="Na(+)/H(+) antiporter NhaA">
    <location>
        <begin position="1"/>
        <end position="394"/>
    </location>
</feature>
<feature type="transmembrane region" description="Helical" evidence="1">
    <location>
        <begin position="17"/>
        <end position="37"/>
    </location>
</feature>
<feature type="transmembrane region" description="Helical" evidence="1">
    <location>
        <begin position="59"/>
        <end position="79"/>
    </location>
</feature>
<feature type="transmembrane region" description="Helical" evidence="1">
    <location>
        <begin position="95"/>
        <end position="115"/>
    </location>
</feature>
<feature type="transmembrane region" description="Helical" evidence="1">
    <location>
        <begin position="124"/>
        <end position="144"/>
    </location>
</feature>
<feature type="transmembrane region" description="Helical" evidence="1">
    <location>
        <begin position="154"/>
        <end position="174"/>
    </location>
</feature>
<feature type="transmembrane region" description="Helical" evidence="1">
    <location>
        <begin position="177"/>
        <end position="197"/>
    </location>
</feature>
<feature type="transmembrane region" description="Helical" evidence="1">
    <location>
        <begin position="213"/>
        <end position="233"/>
    </location>
</feature>
<feature type="transmembrane region" description="Helical" evidence="1">
    <location>
        <begin position="261"/>
        <end position="281"/>
    </location>
</feature>
<feature type="transmembrane region" description="Helical" evidence="1">
    <location>
        <begin position="287"/>
        <end position="307"/>
    </location>
</feature>
<feature type="transmembrane region" description="Helical" evidence="1">
    <location>
        <begin position="328"/>
        <end position="348"/>
    </location>
</feature>
<feature type="transmembrane region" description="Helical" evidence="1">
    <location>
        <begin position="363"/>
        <end position="383"/>
    </location>
</feature>
<reference key="1">
    <citation type="submission" date="2006-08" db="EMBL/GenBank/DDBJ databases">
        <title>Complete sequence of Shewanella frigidimarina NCIMB 400.</title>
        <authorList>
            <consortium name="US DOE Joint Genome Institute"/>
            <person name="Copeland A."/>
            <person name="Lucas S."/>
            <person name="Lapidus A."/>
            <person name="Barry K."/>
            <person name="Detter J.C."/>
            <person name="Glavina del Rio T."/>
            <person name="Hammon N."/>
            <person name="Israni S."/>
            <person name="Dalin E."/>
            <person name="Tice H."/>
            <person name="Pitluck S."/>
            <person name="Fredrickson J.K."/>
            <person name="Kolker E."/>
            <person name="McCuel L.A."/>
            <person name="DiChristina T."/>
            <person name="Nealson K.H."/>
            <person name="Newman D."/>
            <person name="Tiedje J.M."/>
            <person name="Zhou J."/>
            <person name="Romine M.F."/>
            <person name="Culley D.E."/>
            <person name="Serres M."/>
            <person name="Chertkov O."/>
            <person name="Brettin T."/>
            <person name="Bruce D."/>
            <person name="Han C."/>
            <person name="Tapia R."/>
            <person name="Gilna P."/>
            <person name="Schmutz J."/>
            <person name="Larimer F."/>
            <person name="Land M."/>
            <person name="Hauser L."/>
            <person name="Kyrpides N."/>
            <person name="Mikhailova N."/>
            <person name="Richardson P."/>
        </authorList>
    </citation>
    <scope>NUCLEOTIDE SEQUENCE [LARGE SCALE GENOMIC DNA]</scope>
    <source>
        <strain>NCIMB 400</strain>
    </source>
</reference>
<keyword id="KW-0050">Antiport</keyword>
<keyword id="KW-0997">Cell inner membrane</keyword>
<keyword id="KW-1003">Cell membrane</keyword>
<keyword id="KW-0406">Ion transport</keyword>
<keyword id="KW-0472">Membrane</keyword>
<keyword id="KW-1185">Reference proteome</keyword>
<keyword id="KW-0915">Sodium</keyword>
<keyword id="KW-0739">Sodium transport</keyword>
<keyword id="KW-0812">Transmembrane</keyword>
<keyword id="KW-1133">Transmembrane helix</keyword>
<keyword id="KW-0813">Transport</keyword>
<organism>
    <name type="scientific">Shewanella frigidimarina (strain NCIMB 400)</name>
    <dbReference type="NCBI Taxonomy" id="318167"/>
    <lineage>
        <taxon>Bacteria</taxon>
        <taxon>Pseudomonadati</taxon>
        <taxon>Pseudomonadota</taxon>
        <taxon>Gammaproteobacteria</taxon>
        <taxon>Alteromonadales</taxon>
        <taxon>Shewanellaceae</taxon>
        <taxon>Shewanella</taxon>
    </lineage>
</organism>